<proteinExistence type="inferred from homology"/>
<accession>A8F9Q8</accession>
<comment type="function">
    <text evidence="1">Catalyzes the conversion of lactate to pyruvate.</text>
</comment>
<comment type="catalytic activity">
    <reaction evidence="1">
        <text>(S)-lactate + NAD(+) = pyruvate + NADH + H(+)</text>
        <dbReference type="Rhea" id="RHEA:23444"/>
        <dbReference type="ChEBI" id="CHEBI:15361"/>
        <dbReference type="ChEBI" id="CHEBI:15378"/>
        <dbReference type="ChEBI" id="CHEBI:16651"/>
        <dbReference type="ChEBI" id="CHEBI:57540"/>
        <dbReference type="ChEBI" id="CHEBI:57945"/>
        <dbReference type="EC" id="1.1.1.27"/>
    </reaction>
</comment>
<comment type="activity regulation">
    <text evidence="1">Allosterically activated by fructose 1,6-bisphosphate (FBP).</text>
</comment>
<comment type="pathway">
    <text evidence="1">Fermentation; pyruvate fermentation to lactate; (S)-lactate from pyruvate: step 1/1.</text>
</comment>
<comment type="subunit">
    <text evidence="1">Homotetramer.</text>
</comment>
<comment type="subcellular location">
    <subcellularLocation>
        <location evidence="1">Cytoplasm</location>
    </subcellularLocation>
</comment>
<comment type="similarity">
    <text evidence="1">Belongs to the LDH/MDH superfamily. LDH family.</text>
</comment>
<sequence>MTNEKVNKVALIGAGFVGSSYAFTLINQVITDELVVIDLNQDKAMGDVMDLNHGKAFAPHPVNTWYGDYEDCKDADIVCICAGANQKPGETRLDLVEKNLNIFKGIVDNVMKSGFDGIFLVATNPVDILTYATWKFSGLPKERVIGSGTTLDTARFRYMLSEYFDAAAHNVHAYIIGEHGDTELAVWSHANIGSVPITELMKKNDQYKQEDLDEMMENVRHAAYQIIEKKGATYYGVAMSLARITRAILHNENSILTVSTYLDGEYGADDVYIGVPALVNRNGATEVIELALNDTEKEQFAHSVNVLKEILAPHF</sequence>
<protein>
    <recommendedName>
        <fullName evidence="1">L-lactate dehydrogenase</fullName>
        <shortName evidence="1">L-LDH</shortName>
        <ecNumber evidence="1">1.1.1.27</ecNumber>
    </recommendedName>
</protein>
<organism>
    <name type="scientific">Bacillus pumilus (strain SAFR-032)</name>
    <dbReference type="NCBI Taxonomy" id="315750"/>
    <lineage>
        <taxon>Bacteria</taxon>
        <taxon>Bacillati</taxon>
        <taxon>Bacillota</taxon>
        <taxon>Bacilli</taxon>
        <taxon>Bacillales</taxon>
        <taxon>Bacillaceae</taxon>
        <taxon>Bacillus</taxon>
    </lineage>
</organism>
<feature type="chain" id="PRO_1000060438" description="L-lactate dehydrogenase">
    <location>
        <begin position="1"/>
        <end position="315"/>
    </location>
</feature>
<feature type="active site" description="Proton acceptor" evidence="1">
    <location>
        <position position="179"/>
    </location>
</feature>
<feature type="binding site" evidence="1">
    <location>
        <position position="17"/>
    </location>
    <ligand>
        <name>NAD(+)</name>
        <dbReference type="ChEBI" id="CHEBI:57540"/>
    </ligand>
</feature>
<feature type="binding site" evidence="1">
    <location>
        <position position="38"/>
    </location>
    <ligand>
        <name>NAD(+)</name>
        <dbReference type="ChEBI" id="CHEBI:57540"/>
    </ligand>
</feature>
<feature type="binding site" evidence="1">
    <location>
        <position position="43"/>
    </location>
    <ligand>
        <name>NAD(+)</name>
        <dbReference type="ChEBI" id="CHEBI:57540"/>
    </ligand>
</feature>
<feature type="binding site" evidence="1">
    <location>
        <position position="69"/>
    </location>
    <ligand>
        <name>NAD(+)</name>
        <dbReference type="ChEBI" id="CHEBI:57540"/>
    </ligand>
</feature>
<feature type="binding site" evidence="1">
    <location>
        <begin position="83"/>
        <end position="84"/>
    </location>
    <ligand>
        <name>NAD(+)</name>
        <dbReference type="ChEBI" id="CHEBI:57540"/>
    </ligand>
</feature>
<feature type="binding site" evidence="1">
    <location>
        <position position="86"/>
    </location>
    <ligand>
        <name>substrate</name>
    </ligand>
</feature>
<feature type="binding site" evidence="1">
    <location>
        <position position="92"/>
    </location>
    <ligand>
        <name>substrate</name>
    </ligand>
</feature>
<feature type="binding site" evidence="1">
    <location>
        <begin position="122"/>
        <end position="124"/>
    </location>
    <ligand>
        <name>NAD(+)</name>
        <dbReference type="ChEBI" id="CHEBI:57540"/>
    </ligand>
</feature>
<feature type="binding site" evidence="1">
    <location>
        <begin position="124"/>
        <end position="127"/>
    </location>
    <ligand>
        <name>substrate</name>
    </ligand>
</feature>
<feature type="binding site" evidence="1">
    <location>
        <position position="147"/>
    </location>
    <ligand>
        <name>NAD(+)</name>
        <dbReference type="ChEBI" id="CHEBI:57540"/>
    </ligand>
</feature>
<feature type="binding site" evidence="1">
    <location>
        <begin position="152"/>
        <end position="155"/>
    </location>
    <ligand>
        <name>substrate</name>
    </ligand>
</feature>
<feature type="binding site" evidence="1">
    <location>
        <position position="157"/>
    </location>
    <ligand>
        <name>beta-D-fructose 1,6-bisphosphate</name>
        <dbReference type="ChEBI" id="CHEBI:32966"/>
        <note>allosteric activator</note>
    </ligand>
</feature>
<feature type="binding site" evidence="1">
    <location>
        <position position="172"/>
    </location>
    <ligand>
        <name>beta-D-fructose 1,6-bisphosphate</name>
        <dbReference type="ChEBI" id="CHEBI:32966"/>
        <note>allosteric activator</note>
    </ligand>
</feature>
<feature type="binding site" evidence="1">
    <location>
        <position position="233"/>
    </location>
    <ligand>
        <name>substrate</name>
    </ligand>
</feature>
<feature type="modified residue" description="Phosphotyrosine" evidence="1">
    <location>
        <position position="224"/>
    </location>
</feature>
<gene>
    <name evidence="1" type="primary">ldh</name>
    <name type="ordered locus">BPUM_0277</name>
</gene>
<dbReference type="EC" id="1.1.1.27" evidence="1"/>
<dbReference type="EMBL" id="CP000813">
    <property type="protein sequence ID" value="ABV60975.1"/>
    <property type="molecule type" value="Genomic_DNA"/>
</dbReference>
<dbReference type="RefSeq" id="WP_012008847.1">
    <property type="nucleotide sequence ID" value="NZ_VEIS01000004.1"/>
</dbReference>
<dbReference type="SMR" id="A8F9Q8"/>
<dbReference type="STRING" id="315750.BPUM_0277"/>
<dbReference type="GeneID" id="5619528"/>
<dbReference type="KEGG" id="bpu:BPUM_0277"/>
<dbReference type="eggNOG" id="COG0039">
    <property type="taxonomic scope" value="Bacteria"/>
</dbReference>
<dbReference type="HOGENOM" id="CLU_045401_1_1_9"/>
<dbReference type="OrthoDB" id="9802969at2"/>
<dbReference type="UniPathway" id="UPA00554">
    <property type="reaction ID" value="UER00611"/>
</dbReference>
<dbReference type="Proteomes" id="UP000001355">
    <property type="component" value="Chromosome"/>
</dbReference>
<dbReference type="GO" id="GO:0005737">
    <property type="term" value="C:cytoplasm"/>
    <property type="evidence" value="ECO:0007669"/>
    <property type="project" value="UniProtKB-SubCell"/>
</dbReference>
<dbReference type="GO" id="GO:0004459">
    <property type="term" value="F:L-lactate dehydrogenase activity"/>
    <property type="evidence" value="ECO:0007669"/>
    <property type="project" value="UniProtKB-UniRule"/>
</dbReference>
<dbReference type="GO" id="GO:0006096">
    <property type="term" value="P:glycolytic process"/>
    <property type="evidence" value="ECO:0007669"/>
    <property type="project" value="UniProtKB-UniRule"/>
</dbReference>
<dbReference type="GO" id="GO:0006089">
    <property type="term" value="P:lactate metabolic process"/>
    <property type="evidence" value="ECO:0007669"/>
    <property type="project" value="TreeGrafter"/>
</dbReference>
<dbReference type="CDD" id="cd05291">
    <property type="entry name" value="HicDH_like"/>
    <property type="match status" value="1"/>
</dbReference>
<dbReference type="FunFam" id="3.40.50.720:FF:000018">
    <property type="entry name" value="Malate dehydrogenase"/>
    <property type="match status" value="1"/>
</dbReference>
<dbReference type="Gene3D" id="3.90.110.10">
    <property type="entry name" value="Lactate dehydrogenase/glycoside hydrolase, family 4, C-terminal"/>
    <property type="match status" value="1"/>
</dbReference>
<dbReference type="Gene3D" id="3.40.50.720">
    <property type="entry name" value="NAD(P)-binding Rossmann-like Domain"/>
    <property type="match status" value="1"/>
</dbReference>
<dbReference type="HAMAP" id="MF_00488">
    <property type="entry name" value="Lactate_dehydrog"/>
    <property type="match status" value="1"/>
</dbReference>
<dbReference type="InterPro" id="IPR001557">
    <property type="entry name" value="L-lactate/malate_DH"/>
</dbReference>
<dbReference type="InterPro" id="IPR011304">
    <property type="entry name" value="L-lactate_DH"/>
</dbReference>
<dbReference type="InterPro" id="IPR018177">
    <property type="entry name" value="L-lactate_DH_AS"/>
</dbReference>
<dbReference type="InterPro" id="IPR022383">
    <property type="entry name" value="Lactate/malate_DH_C"/>
</dbReference>
<dbReference type="InterPro" id="IPR001236">
    <property type="entry name" value="Lactate/malate_DH_N"/>
</dbReference>
<dbReference type="InterPro" id="IPR015955">
    <property type="entry name" value="Lactate_DH/Glyco_Ohase_4_C"/>
</dbReference>
<dbReference type="InterPro" id="IPR036291">
    <property type="entry name" value="NAD(P)-bd_dom_sf"/>
</dbReference>
<dbReference type="NCBIfam" id="TIGR01771">
    <property type="entry name" value="L-LDH-NAD"/>
    <property type="match status" value="1"/>
</dbReference>
<dbReference type="NCBIfam" id="NF000824">
    <property type="entry name" value="PRK00066.1"/>
    <property type="match status" value="1"/>
</dbReference>
<dbReference type="NCBIfam" id="NF004863">
    <property type="entry name" value="PRK06223.1"/>
    <property type="match status" value="1"/>
</dbReference>
<dbReference type="PANTHER" id="PTHR43128">
    <property type="entry name" value="L-2-HYDROXYCARBOXYLATE DEHYDROGENASE (NAD(P)(+))"/>
    <property type="match status" value="1"/>
</dbReference>
<dbReference type="PANTHER" id="PTHR43128:SF16">
    <property type="entry name" value="L-LACTATE DEHYDROGENASE"/>
    <property type="match status" value="1"/>
</dbReference>
<dbReference type="Pfam" id="PF02866">
    <property type="entry name" value="Ldh_1_C"/>
    <property type="match status" value="1"/>
</dbReference>
<dbReference type="Pfam" id="PF00056">
    <property type="entry name" value="Ldh_1_N"/>
    <property type="match status" value="1"/>
</dbReference>
<dbReference type="PIRSF" id="PIRSF000102">
    <property type="entry name" value="Lac_mal_DH"/>
    <property type="match status" value="1"/>
</dbReference>
<dbReference type="PRINTS" id="PR00086">
    <property type="entry name" value="LLDHDRGNASE"/>
</dbReference>
<dbReference type="SUPFAM" id="SSF56327">
    <property type="entry name" value="LDH C-terminal domain-like"/>
    <property type="match status" value="1"/>
</dbReference>
<dbReference type="SUPFAM" id="SSF51735">
    <property type="entry name" value="NAD(P)-binding Rossmann-fold domains"/>
    <property type="match status" value="1"/>
</dbReference>
<dbReference type="PROSITE" id="PS00064">
    <property type="entry name" value="L_LDH"/>
    <property type="match status" value="1"/>
</dbReference>
<reference key="1">
    <citation type="journal article" date="2007" name="PLoS ONE">
        <title>Paradoxical DNA repair and peroxide resistance gene conservation in Bacillus pumilus SAFR-032.</title>
        <authorList>
            <person name="Gioia J."/>
            <person name="Yerrapragada S."/>
            <person name="Qin X."/>
            <person name="Jiang H."/>
            <person name="Igboeli O.C."/>
            <person name="Muzny D."/>
            <person name="Dugan-Rocha S."/>
            <person name="Ding Y."/>
            <person name="Hawes A."/>
            <person name="Liu W."/>
            <person name="Perez L."/>
            <person name="Kovar C."/>
            <person name="Dinh H."/>
            <person name="Lee S."/>
            <person name="Nazareth L."/>
            <person name="Blyth P."/>
            <person name="Holder M."/>
            <person name="Buhay C."/>
            <person name="Tirumalai M.R."/>
            <person name="Liu Y."/>
            <person name="Dasgupta I."/>
            <person name="Bokhetache L."/>
            <person name="Fujita M."/>
            <person name="Karouia F."/>
            <person name="Eswara Moorthy P."/>
            <person name="Siefert J."/>
            <person name="Uzman A."/>
            <person name="Buzumbo P."/>
            <person name="Verma A."/>
            <person name="Zwiya H."/>
            <person name="McWilliams B.D."/>
            <person name="Olowu A."/>
            <person name="Clinkenbeard K.D."/>
            <person name="Newcombe D."/>
            <person name="Golebiewski L."/>
            <person name="Petrosino J.F."/>
            <person name="Nicholson W.L."/>
            <person name="Fox G.E."/>
            <person name="Venkateswaran K."/>
            <person name="Highlander S.K."/>
            <person name="Weinstock G.M."/>
        </authorList>
    </citation>
    <scope>NUCLEOTIDE SEQUENCE [LARGE SCALE GENOMIC DNA]</scope>
    <source>
        <strain>SAFR-032</strain>
    </source>
</reference>
<evidence type="ECO:0000255" key="1">
    <source>
        <dbReference type="HAMAP-Rule" id="MF_00488"/>
    </source>
</evidence>
<name>LDH_BACP2</name>
<keyword id="KW-0021">Allosteric enzyme</keyword>
<keyword id="KW-0963">Cytoplasm</keyword>
<keyword id="KW-0520">NAD</keyword>
<keyword id="KW-0560">Oxidoreductase</keyword>
<keyword id="KW-0597">Phosphoprotein</keyword>